<gene>
    <name type="primary">MT-ND4L</name>
    <name type="synonym">MTND4L</name>
    <name type="synonym">NADH4L</name>
    <name type="synonym">ND4L</name>
</gene>
<name>NU4LM_CHLAE</name>
<protein>
    <recommendedName>
        <fullName>NADH-ubiquinone oxidoreductase chain 4L</fullName>
        <ecNumber>7.1.1.2</ecNumber>
    </recommendedName>
    <alternativeName>
        <fullName>NADH dehydrogenase subunit 4L</fullName>
    </alternativeName>
</protein>
<comment type="function">
    <text evidence="1">Core subunit of the mitochondrial membrane respiratory chain NADH dehydrogenase (Complex I) which catalyzes electron transfer from NADH through the respiratory chain, using ubiquinone as an electron acceptor. Part of the enzyme membrane arm which is embedded in the lipid bilayer and involved in proton translocation.</text>
</comment>
<comment type="catalytic activity">
    <reaction evidence="1">
        <text>a ubiquinone + NADH + 5 H(+)(in) = a ubiquinol + NAD(+) + 4 H(+)(out)</text>
        <dbReference type="Rhea" id="RHEA:29091"/>
        <dbReference type="Rhea" id="RHEA-COMP:9565"/>
        <dbReference type="Rhea" id="RHEA-COMP:9566"/>
        <dbReference type="ChEBI" id="CHEBI:15378"/>
        <dbReference type="ChEBI" id="CHEBI:16389"/>
        <dbReference type="ChEBI" id="CHEBI:17976"/>
        <dbReference type="ChEBI" id="CHEBI:57540"/>
        <dbReference type="ChEBI" id="CHEBI:57945"/>
        <dbReference type="EC" id="7.1.1.2"/>
    </reaction>
    <physiologicalReaction direction="left-to-right" evidence="1">
        <dbReference type="Rhea" id="RHEA:29092"/>
    </physiologicalReaction>
</comment>
<comment type="subunit">
    <text evidence="2">Core subunit of respiratory chain NADH dehydrogenase (Complex I) which is composed of 45 different subunits.</text>
</comment>
<comment type="subcellular location">
    <subcellularLocation>
        <location evidence="2">Mitochondrion inner membrane</location>
        <topology evidence="3">Multi-pass membrane protein</topology>
    </subcellularLocation>
</comment>
<comment type="similarity">
    <text evidence="4">Belongs to the complex I subunit 4L family.</text>
</comment>
<sequence>MSPIFINITLAFTISLLGMLVYRSHLMASLLCLEGMMMSLFITIALMASNTHSPLINIMPITLLVFAACETAVGLALLVSISNTYGLDYIHNLNLLQC</sequence>
<accession>Q50DL2</accession>
<proteinExistence type="inferred from homology"/>
<reference key="1">
    <citation type="journal article" date="2005" name="J. Hum. Evol.">
        <title>Catarrhine primate divergence dates estimated from complete mitochondrial genomes: concordance with fossil and nuclear DNA evidence.</title>
        <authorList>
            <person name="Raaum R.L."/>
            <person name="Sterner K.N."/>
            <person name="Noviello C.M."/>
            <person name="Stewart C.-B.R."/>
            <person name="Disotell T.R."/>
        </authorList>
    </citation>
    <scope>NUCLEOTIDE SEQUENCE [GENOMIC DNA]</scope>
</reference>
<organism>
    <name type="scientific">Chlorocebus aethiops</name>
    <name type="common">Green monkey</name>
    <name type="synonym">Cercopithecus aethiops</name>
    <dbReference type="NCBI Taxonomy" id="9534"/>
    <lineage>
        <taxon>Eukaryota</taxon>
        <taxon>Metazoa</taxon>
        <taxon>Chordata</taxon>
        <taxon>Craniata</taxon>
        <taxon>Vertebrata</taxon>
        <taxon>Euteleostomi</taxon>
        <taxon>Mammalia</taxon>
        <taxon>Eutheria</taxon>
        <taxon>Euarchontoglires</taxon>
        <taxon>Primates</taxon>
        <taxon>Haplorrhini</taxon>
        <taxon>Catarrhini</taxon>
        <taxon>Cercopithecidae</taxon>
        <taxon>Cercopithecinae</taxon>
        <taxon>Chlorocebus</taxon>
    </lineage>
</organism>
<geneLocation type="mitochondrion"/>
<feature type="chain" id="PRO_0000274989" description="NADH-ubiquinone oxidoreductase chain 4L">
    <location>
        <begin position="1"/>
        <end position="98"/>
    </location>
</feature>
<feature type="transmembrane region" description="Helical" evidence="3">
    <location>
        <begin position="1"/>
        <end position="21"/>
    </location>
</feature>
<feature type="transmembrane region" description="Helical" evidence="3">
    <location>
        <begin position="26"/>
        <end position="46"/>
    </location>
</feature>
<feature type="transmembrane region" description="Helical" evidence="3">
    <location>
        <begin position="61"/>
        <end position="81"/>
    </location>
</feature>
<dbReference type="EC" id="7.1.1.2"/>
<dbReference type="EMBL" id="AY863426">
    <property type="protein sequence ID" value="AAX55616.1"/>
    <property type="molecule type" value="Genomic_DNA"/>
</dbReference>
<dbReference type="RefSeq" id="YP_238250.1">
    <property type="nucleotide sequence ID" value="NC_007009.1"/>
</dbReference>
<dbReference type="SMR" id="Q50DL2"/>
<dbReference type="GeneID" id="3416027"/>
<dbReference type="CTD" id="4539"/>
<dbReference type="GO" id="GO:0005743">
    <property type="term" value="C:mitochondrial inner membrane"/>
    <property type="evidence" value="ECO:0000250"/>
    <property type="project" value="UniProtKB"/>
</dbReference>
<dbReference type="GO" id="GO:0045271">
    <property type="term" value="C:respiratory chain complex I"/>
    <property type="evidence" value="ECO:0000250"/>
    <property type="project" value="UniProtKB"/>
</dbReference>
<dbReference type="GO" id="GO:0008137">
    <property type="term" value="F:NADH dehydrogenase (ubiquinone) activity"/>
    <property type="evidence" value="ECO:0000250"/>
    <property type="project" value="UniProtKB"/>
</dbReference>
<dbReference type="GO" id="GO:0042773">
    <property type="term" value="P:ATP synthesis coupled electron transport"/>
    <property type="evidence" value="ECO:0007669"/>
    <property type="project" value="InterPro"/>
</dbReference>
<dbReference type="FunFam" id="1.10.287.3510:FF:000002">
    <property type="entry name" value="NADH-ubiquinone oxidoreductase chain 4L"/>
    <property type="match status" value="1"/>
</dbReference>
<dbReference type="Gene3D" id="1.10.287.3510">
    <property type="match status" value="1"/>
</dbReference>
<dbReference type="InterPro" id="IPR001133">
    <property type="entry name" value="NADH_UbQ_OxRdtase_chain4L/K"/>
</dbReference>
<dbReference type="InterPro" id="IPR039428">
    <property type="entry name" value="NUOK/Mnh_C1-like"/>
</dbReference>
<dbReference type="PANTHER" id="PTHR11434:SF0">
    <property type="entry name" value="NADH-UBIQUINONE OXIDOREDUCTASE CHAIN 4L"/>
    <property type="match status" value="1"/>
</dbReference>
<dbReference type="PANTHER" id="PTHR11434">
    <property type="entry name" value="NADH-UBIQUINONE OXIDOREDUCTASE SUBUNIT ND4L"/>
    <property type="match status" value="1"/>
</dbReference>
<dbReference type="Pfam" id="PF00420">
    <property type="entry name" value="Oxidored_q2"/>
    <property type="match status" value="1"/>
</dbReference>
<evidence type="ECO:0000250" key="1">
    <source>
        <dbReference type="UniProtKB" id="P03901"/>
    </source>
</evidence>
<evidence type="ECO:0000250" key="2">
    <source>
        <dbReference type="UniProtKB" id="P03902"/>
    </source>
</evidence>
<evidence type="ECO:0000255" key="3"/>
<evidence type="ECO:0000305" key="4"/>
<keyword id="KW-0249">Electron transport</keyword>
<keyword id="KW-0472">Membrane</keyword>
<keyword id="KW-0496">Mitochondrion</keyword>
<keyword id="KW-0999">Mitochondrion inner membrane</keyword>
<keyword id="KW-0520">NAD</keyword>
<keyword id="KW-0679">Respiratory chain</keyword>
<keyword id="KW-1278">Translocase</keyword>
<keyword id="KW-0812">Transmembrane</keyword>
<keyword id="KW-1133">Transmembrane helix</keyword>
<keyword id="KW-0813">Transport</keyword>
<keyword id="KW-0830">Ubiquinone</keyword>